<gene>
    <name evidence="4" type="primary">KATNAL1</name>
</gene>
<sequence>MNLAEICDNAKKGREYALLGNYDSSMVYYQGVIQQIHRHCQSVRDPAVKGKWQQVRQELLEEYEQVKSIVSTLESFKIDKPPDFPVSYQDEPFRDPAVWPPPVPAEHRAPPQIRRPNREVRPLRKDVAGVGARGPVGRAHPISKSEKPSTNKDKDYRARGRDDKGRKNMQDGASDGDILKFDGAGYDKDLVEALERDIVSRNPSIHWDDIADLEEAKKLLREAVVLPMWMPDFFKGIRRPWKGVLMVGPPGTGKTMLAKAVATECGTTFFNVSSSTLTSKYRGESEKLVRLLFEMARFYAPTTIFIDEIDSICSRRGTSDEHEASRRVKSELLIQMDGVGGALENDDPSKMVMVLAATNFPWDIDEALRRRLEKRIYIPLPTAKGRTDLLKINLREVELDPDIQLEDIAEKIEGYSGADITNVCRDASLMAMRRRINGLSPEEIRALSKEELQMPVTKGDFDLALKKIAKSVSDADLEKYEKWMTEFGSA</sequence>
<organism>
    <name type="scientific">Sorex araneus</name>
    <name type="common">Eurasian common shrew</name>
    <name type="synonym">European shrew</name>
    <dbReference type="NCBI Taxonomy" id="42254"/>
    <lineage>
        <taxon>Eukaryota</taxon>
        <taxon>Metazoa</taxon>
        <taxon>Chordata</taxon>
        <taxon>Craniata</taxon>
        <taxon>Vertebrata</taxon>
        <taxon>Euteleostomi</taxon>
        <taxon>Mammalia</taxon>
        <taxon>Eutheria</taxon>
        <taxon>Laurasiatheria</taxon>
        <taxon>Eulipotyphla</taxon>
        <taxon>Soricidae</taxon>
        <taxon>Soricinae</taxon>
        <taxon>Sorex</taxon>
    </lineage>
</organism>
<keyword id="KW-0007">Acetylation</keyword>
<keyword id="KW-0067">ATP-binding</keyword>
<keyword id="KW-0963">Cytoplasm</keyword>
<keyword id="KW-0206">Cytoskeleton</keyword>
<keyword id="KW-0413">Isomerase</keyword>
<keyword id="KW-0493">Microtubule</keyword>
<keyword id="KW-0547">Nucleotide-binding</keyword>
<keyword id="KW-0597">Phosphoprotein</keyword>
<proteinExistence type="inferred from homology"/>
<evidence type="ECO:0000250" key="1">
    <source>
        <dbReference type="UniProtKB" id="Q5XIK7"/>
    </source>
</evidence>
<evidence type="ECO:0000250" key="2">
    <source>
        <dbReference type="UniProtKB" id="Q8K0T4"/>
    </source>
</evidence>
<evidence type="ECO:0000250" key="3">
    <source>
        <dbReference type="UniProtKB" id="Q9BW62"/>
    </source>
</evidence>
<evidence type="ECO:0000255" key="4">
    <source>
        <dbReference type="HAMAP-Rule" id="MF_03024"/>
    </source>
</evidence>
<evidence type="ECO:0000256" key="5">
    <source>
        <dbReference type="SAM" id="MobiDB-lite"/>
    </source>
</evidence>
<feature type="chain" id="PRO_0000367126" description="Katanin p60 ATPase-containing subunit A-like 1">
    <location>
        <begin position="1"/>
        <end position="490"/>
    </location>
</feature>
<feature type="region of interest" description="Disordered" evidence="5">
    <location>
        <begin position="95"/>
        <end position="178"/>
    </location>
</feature>
<feature type="compositionally biased region" description="Basic and acidic residues" evidence="5">
    <location>
        <begin position="116"/>
        <end position="127"/>
    </location>
</feature>
<feature type="compositionally biased region" description="Low complexity" evidence="5">
    <location>
        <begin position="128"/>
        <end position="139"/>
    </location>
</feature>
<feature type="compositionally biased region" description="Basic and acidic residues" evidence="5">
    <location>
        <begin position="143"/>
        <end position="169"/>
    </location>
</feature>
<feature type="binding site" evidence="4">
    <location>
        <begin position="248"/>
        <end position="255"/>
    </location>
    <ligand>
        <name>ATP</name>
        <dbReference type="ChEBI" id="CHEBI:30616"/>
    </ligand>
</feature>
<feature type="modified residue" description="N-acetylmethionine" evidence="3">
    <location>
        <position position="1"/>
    </location>
</feature>
<feature type="modified residue" description="Phosphoserine" evidence="1">
    <location>
        <position position="174"/>
    </location>
</feature>
<dbReference type="EC" id="5.6.1.1" evidence="4"/>
<dbReference type="EMBL" id="DP000761">
    <property type="protein sequence ID" value="ACE73638.1"/>
    <property type="molecule type" value="Genomic_DNA"/>
</dbReference>
<dbReference type="SMR" id="B3EX35"/>
<dbReference type="GO" id="GO:0005813">
    <property type="term" value="C:centrosome"/>
    <property type="evidence" value="ECO:0007669"/>
    <property type="project" value="UniProtKB-UniRule"/>
</dbReference>
<dbReference type="GO" id="GO:0005737">
    <property type="term" value="C:cytoplasm"/>
    <property type="evidence" value="ECO:0000250"/>
    <property type="project" value="UniProtKB"/>
</dbReference>
<dbReference type="GO" id="GO:0005874">
    <property type="term" value="C:microtubule"/>
    <property type="evidence" value="ECO:0000250"/>
    <property type="project" value="UniProtKB"/>
</dbReference>
<dbReference type="GO" id="GO:0005819">
    <property type="term" value="C:spindle"/>
    <property type="evidence" value="ECO:0000250"/>
    <property type="project" value="UniProtKB"/>
</dbReference>
<dbReference type="GO" id="GO:0000922">
    <property type="term" value="C:spindle pole"/>
    <property type="evidence" value="ECO:0000250"/>
    <property type="project" value="UniProtKB"/>
</dbReference>
<dbReference type="GO" id="GO:0005524">
    <property type="term" value="F:ATP binding"/>
    <property type="evidence" value="ECO:0007669"/>
    <property type="project" value="UniProtKB-KW"/>
</dbReference>
<dbReference type="GO" id="GO:0016887">
    <property type="term" value="F:ATP hydrolysis activity"/>
    <property type="evidence" value="ECO:0007669"/>
    <property type="project" value="InterPro"/>
</dbReference>
<dbReference type="GO" id="GO:0008017">
    <property type="term" value="F:microtubule binding"/>
    <property type="evidence" value="ECO:0007669"/>
    <property type="project" value="UniProtKB-UniRule"/>
</dbReference>
<dbReference type="GO" id="GO:0008568">
    <property type="term" value="F:microtubule severing ATPase activity"/>
    <property type="evidence" value="ECO:0000250"/>
    <property type="project" value="UniProtKB"/>
</dbReference>
<dbReference type="GO" id="GO:0051013">
    <property type="term" value="P:microtubule severing"/>
    <property type="evidence" value="ECO:0000250"/>
    <property type="project" value="UniProtKB"/>
</dbReference>
<dbReference type="GO" id="GO:0007283">
    <property type="term" value="P:spermatogenesis"/>
    <property type="evidence" value="ECO:0007669"/>
    <property type="project" value="UniProtKB-UniRule"/>
</dbReference>
<dbReference type="CDD" id="cd21748">
    <property type="entry name" value="Kp60-NTD"/>
    <property type="match status" value="1"/>
</dbReference>
<dbReference type="CDD" id="cd19522">
    <property type="entry name" value="RecA-like_KTNA1"/>
    <property type="match status" value="1"/>
</dbReference>
<dbReference type="FunFam" id="1.10.8.60:FF:000025">
    <property type="entry name" value="Katanin p60 ATPase-containing subunit A1"/>
    <property type="match status" value="1"/>
</dbReference>
<dbReference type="FunFam" id="1.20.58.80:FF:000003">
    <property type="entry name" value="Katanin p60 ATPase-containing subunit A1"/>
    <property type="match status" value="1"/>
</dbReference>
<dbReference type="FunFam" id="3.40.50.300:FF:000159">
    <property type="entry name" value="Katanin p60 ATPase-containing subunit A1"/>
    <property type="match status" value="1"/>
</dbReference>
<dbReference type="Gene3D" id="1.10.8.60">
    <property type="match status" value="1"/>
</dbReference>
<dbReference type="Gene3D" id="3.40.50.300">
    <property type="entry name" value="P-loop containing nucleotide triphosphate hydrolases"/>
    <property type="match status" value="1"/>
</dbReference>
<dbReference type="Gene3D" id="1.20.58.80">
    <property type="entry name" value="Phosphotransferase system, lactose/cellobiose-type IIA subunit"/>
    <property type="match status" value="1"/>
</dbReference>
<dbReference type="HAMAP" id="MF_03023">
    <property type="entry name" value="Katanin_p60_A1"/>
    <property type="match status" value="1"/>
</dbReference>
<dbReference type="HAMAP" id="MF_03024">
    <property type="entry name" value="Katanin_p60_AL1"/>
    <property type="match status" value="1"/>
</dbReference>
<dbReference type="InterPro" id="IPR003593">
    <property type="entry name" value="AAA+_ATPase"/>
</dbReference>
<dbReference type="InterPro" id="IPR041569">
    <property type="entry name" value="AAA_lid_3"/>
</dbReference>
<dbReference type="InterPro" id="IPR003959">
    <property type="entry name" value="ATPase_AAA_core"/>
</dbReference>
<dbReference type="InterPro" id="IPR003960">
    <property type="entry name" value="ATPase_AAA_CS"/>
</dbReference>
<dbReference type="InterPro" id="IPR028596">
    <property type="entry name" value="KATNA1"/>
</dbReference>
<dbReference type="InterPro" id="IPR048611">
    <property type="entry name" value="KATNA1_MIT"/>
</dbReference>
<dbReference type="InterPro" id="IPR028594">
    <property type="entry name" value="Katnal1_chordates"/>
</dbReference>
<dbReference type="InterPro" id="IPR048612">
    <property type="entry name" value="KTNA1_AAA_dom"/>
</dbReference>
<dbReference type="InterPro" id="IPR050304">
    <property type="entry name" value="MT-severing_AAA_ATPase"/>
</dbReference>
<dbReference type="InterPro" id="IPR027417">
    <property type="entry name" value="P-loop_NTPase"/>
</dbReference>
<dbReference type="InterPro" id="IPR015415">
    <property type="entry name" value="Spast_Vps4_C"/>
</dbReference>
<dbReference type="PANTHER" id="PTHR23074">
    <property type="entry name" value="AAA DOMAIN-CONTAINING"/>
    <property type="match status" value="1"/>
</dbReference>
<dbReference type="PANTHER" id="PTHR23074:SF65">
    <property type="entry name" value="KATANIN P60 ATPASE-CONTAINING SUBUNIT A-LIKE 1"/>
    <property type="match status" value="1"/>
</dbReference>
<dbReference type="Pfam" id="PF00004">
    <property type="entry name" value="AAA"/>
    <property type="match status" value="1"/>
</dbReference>
<dbReference type="Pfam" id="PF17862">
    <property type="entry name" value="AAA_lid_3"/>
    <property type="match status" value="1"/>
</dbReference>
<dbReference type="Pfam" id="PF21126">
    <property type="entry name" value="KATNA1_MIT"/>
    <property type="match status" value="1"/>
</dbReference>
<dbReference type="Pfam" id="PF09336">
    <property type="entry name" value="Vps4_C"/>
    <property type="match status" value="1"/>
</dbReference>
<dbReference type="SMART" id="SM00382">
    <property type="entry name" value="AAA"/>
    <property type="match status" value="1"/>
</dbReference>
<dbReference type="SUPFAM" id="SSF52540">
    <property type="entry name" value="P-loop containing nucleoside triphosphate hydrolases"/>
    <property type="match status" value="1"/>
</dbReference>
<dbReference type="PROSITE" id="PS00674">
    <property type="entry name" value="AAA"/>
    <property type="match status" value="1"/>
</dbReference>
<name>KATL1_SORAR</name>
<accession>B3EX35</accession>
<protein>
    <recommendedName>
        <fullName evidence="4">Katanin p60 ATPase-containing subunit A-like 1</fullName>
        <shortName evidence="4">Katanin p60 subunit A-like 1</shortName>
        <ecNumber evidence="4">5.6.1.1</ecNumber>
    </recommendedName>
    <alternativeName>
        <fullName evidence="4">p60 katanin-like 1</fullName>
    </alternativeName>
</protein>
<comment type="function">
    <text evidence="2 3">Regulates microtubule dynamics in Sertoli cells, a process that is essential for spermiogenesis and male fertility. Severs microtubules in an ATP-dependent manner, promoting rapid reorganization of cellular microtubule arrays (By similarity). Has microtubule-severing activity in vitro (By similarity).</text>
</comment>
<comment type="catalytic activity">
    <reaction evidence="4">
        <text>n ATP + n H2O + a microtubule = n ADP + n phosphate + (n+1) alpha/beta tubulin heterodimers.</text>
        <dbReference type="EC" id="5.6.1.1"/>
    </reaction>
</comment>
<comment type="subunit">
    <text evidence="3">Interacts with KATNB1 and KATNBL1.</text>
</comment>
<comment type="subcellular location">
    <subcellularLocation>
        <location evidence="4">Cytoplasm</location>
        <location evidence="4">Cytoskeleton</location>
    </subcellularLocation>
    <subcellularLocation>
        <location evidence="3">Cytoplasm</location>
    </subcellularLocation>
    <subcellularLocation>
        <location evidence="3">Cytoplasm</location>
        <location evidence="3">Cytoskeleton</location>
        <location evidence="3">Spindle pole</location>
    </subcellularLocation>
    <subcellularLocation>
        <location evidence="3">Cytoplasm</location>
        <location evidence="3">Cytoskeleton</location>
        <location evidence="3">Spindle</location>
    </subcellularLocation>
    <text evidence="2 3">Colocalizes with microtubules throughout the basal and adluminal compartments of Sertoli cells (By similarity). Localizes within the cytoplasm, partially overlapping with microtubules, in interphase and to the mitotic spindle and spindle poles during mitosis (By similarity).</text>
</comment>
<comment type="similarity">
    <text evidence="4">Belongs to the AAA ATPase family. Katanin p60 subunit A1 subfamily. A-like 1 sub-subfamily.</text>
</comment>
<reference key="1">
    <citation type="submission" date="2008-06" db="EMBL/GenBank/DDBJ databases">
        <title>NISC comparative sequencing initiative.</title>
        <authorList>
            <person name="Antonellis A."/>
            <person name="Benjamin B."/>
            <person name="Blakesley R.W."/>
            <person name="Bouffard G.G."/>
            <person name="Brinkley C."/>
            <person name="Brooks S."/>
            <person name="Chu G."/>
            <person name="Chub I."/>
            <person name="Coleman H."/>
            <person name="Fuksenko T."/>
            <person name="Gestole M."/>
            <person name="Gregory M."/>
            <person name="Guan X."/>
            <person name="Gupta J."/>
            <person name="Gurson N."/>
            <person name="Han E."/>
            <person name="Han J."/>
            <person name="Hansen N."/>
            <person name="Hargrove A."/>
            <person name="Hines-Harris K."/>
            <person name="Ho S.-L."/>
            <person name="Hu P."/>
            <person name="Hunter G."/>
            <person name="Hurle B."/>
            <person name="Idol J.R."/>
            <person name="Johnson T."/>
            <person name="Knight E."/>
            <person name="Kwong P."/>
            <person name="Lee-Lin S.-Q."/>
            <person name="Legaspi R."/>
            <person name="Madden M."/>
            <person name="Maduro Q.L."/>
            <person name="Maduro V.B."/>
            <person name="Margulies E.H."/>
            <person name="Masiello C."/>
            <person name="Maskeri B."/>
            <person name="McDowell J."/>
            <person name="Merkulov G."/>
            <person name="Montemayor C."/>
            <person name="Mullikin J.C."/>
            <person name="Park M."/>
            <person name="Prasad A."/>
            <person name="Ramsahoye C."/>
            <person name="Reddix-Dugue N."/>
            <person name="Riebow N."/>
            <person name="Schandler K."/>
            <person name="Schueler M.G."/>
            <person name="Sison C."/>
            <person name="Smith L."/>
            <person name="Stantripop S."/>
            <person name="Thomas J.W."/>
            <person name="Thomas P.J."/>
            <person name="Tsipouri V."/>
            <person name="Young A."/>
            <person name="Green E.D."/>
        </authorList>
    </citation>
    <scope>NUCLEOTIDE SEQUENCE [LARGE SCALE GENOMIC DNA]</scope>
</reference>